<dbReference type="EMBL" id="X59720">
    <property type="protein sequence ID" value="CAA42260.1"/>
    <property type="molecule type" value="Genomic_DNA"/>
</dbReference>
<dbReference type="EMBL" id="BK006937">
    <property type="protein sequence ID" value="DAA80272.1"/>
    <property type="molecule type" value="Genomic_DNA"/>
</dbReference>
<dbReference type="PIR" id="S19500">
    <property type="entry name" value="S19500"/>
</dbReference>
<dbReference type="RefSeq" id="NP_001335752.1">
    <property type="nucleotide sequence ID" value="NM_001348897.1"/>
</dbReference>
<dbReference type="FunCoup" id="P25650">
    <property type="interactions" value="17"/>
</dbReference>
<dbReference type="STRING" id="4932.YCR085W"/>
<dbReference type="PaxDb" id="4932-YCR085W"/>
<dbReference type="EnsemblFungi" id="YCR085W_mRNA">
    <property type="protein sequence ID" value="YCR085W"/>
    <property type="gene ID" value="YCR085W"/>
</dbReference>
<dbReference type="GeneID" id="850446"/>
<dbReference type="AGR" id="SGD:S000000681"/>
<dbReference type="SGD" id="S000000681">
    <property type="gene designation" value="YCR085W"/>
</dbReference>
<dbReference type="HOGENOM" id="CLU_2086675_0_0_1"/>
<dbReference type="InParanoid" id="P25650"/>
<dbReference type="PRO" id="PR:P25650"/>
<dbReference type="Proteomes" id="UP000002311">
    <property type="component" value="Chromosome III"/>
</dbReference>
<dbReference type="RNAct" id="P25650">
    <property type="molecule type" value="protein"/>
</dbReference>
<protein>
    <recommendedName>
        <fullName>Uncharacterized protein YCR085W</fullName>
    </recommendedName>
</protein>
<name>YCX5_YEAST</name>
<reference key="1">
    <citation type="journal article" date="1992" name="Nature">
        <title>The complete DNA sequence of yeast chromosome III.</title>
        <authorList>
            <person name="Oliver S.G."/>
            <person name="van der Aart Q.J.M."/>
            <person name="Agostoni-Carbone M.L."/>
            <person name="Aigle M."/>
            <person name="Alberghina L."/>
            <person name="Alexandraki D."/>
            <person name="Antoine G."/>
            <person name="Anwar R."/>
            <person name="Ballesta J.P.G."/>
            <person name="Benit P."/>
            <person name="Berben G."/>
            <person name="Bergantino E."/>
            <person name="Biteau N."/>
            <person name="Bolle P.-A."/>
            <person name="Bolotin-Fukuhara M."/>
            <person name="Brown A."/>
            <person name="Brown A.J.P."/>
            <person name="Buhler J.-M."/>
            <person name="Carcano C."/>
            <person name="Carignani G."/>
            <person name="Cederberg H."/>
            <person name="Chanet R."/>
            <person name="Contreras R."/>
            <person name="Crouzet M."/>
            <person name="Daignan-Fornier B."/>
            <person name="Defoor E."/>
            <person name="Delgado M.D."/>
            <person name="Demolder J."/>
            <person name="Doira C."/>
            <person name="Dubois E."/>
            <person name="Dujon B."/>
            <person name="Duesterhoeft A."/>
            <person name="Erdmann D."/>
            <person name="Esteban M."/>
            <person name="Fabre F."/>
            <person name="Fairhead C."/>
            <person name="Faye G."/>
            <person name="Feldmann H."/>
            <person name="Fiers W."/>
            <person name="Francingues-Gaillard M.-C."/>
            <person name="Franco L."/>
            <person name="Frontali L."/>
            <person name="Fukuhara H."/>
            <person name="Fuller L.J."/>
            <person name="Galland P."/>
            <person name="Gent M.E."/>
            <person name="Gigot D."/>
            <person name="Gilliquet V."/>
            <person name="Glansdorff N."/>
            <person name="Goffeau A."/>
            <person name="Grenson M."/>
            <person name="Grisanti P."/>
            <person name="Grivell L.A."/>
            <person name="de Haan M."/>
            <person name="Haasemann M."/>
            <person name="Hatat D."/>
            <person name="Hoenicka J."/>
            <person name="Hegemann J.H."/>
            <person name="Herbert C.J."/>
            <person name="Hilger F."/>
            <person name="Hohmann S."/>
            <person name="Hollenberg C.P."/>
            <person name="Huse K."/>
            <person name="Iborra F."/>
            <person name="Indge K.J."/>
            <person name="Isono K."/>
            <person name="Jacq C."/>
            <person name="Jacquet M."/>
            <person name="James C.M."/>
            <person name="Jauniaux J.-C."/>
            <person name="Jia Y."/>
            <person name="Jimenez A."/>
            <person name="Kelly A."/>
            <person name="Kleinhans U."/>
            <person name="Kreisl P."/>
            <person name="Lanfranchi G."/>
            <person name="Lewis C."/>
            <person name="van der Linden C.G."/>
            <person name="Lucchini G."/>
            <person name="Lutzenkirchen K."/>
            <person name="Maat M.J."/>
            <person name="Mallet L."/>
            <person name="Mannhaupt G."/>
            <person name="Martegani E."/>
            <person name="Mathieu A."/>
            <person name="Maurer C.T.C."/>
            <person name="McConnell D."/>
            <person name="McKee R.A."/>
            <person name="Messenguy F."/>
            <person name="Mewes H.-W."/>
            <person name="Molemans F."/>
            <person name="Montague M.A."/>
            <person name="Muzi Falconi M."/>
            <person name="Navas L."/>
            <person name="Newlon C.S."/>
            <person name="Noone D."/>
            <person name="Pallier C."/>
            <person name="Panzeri L."/>
            <person name="Pearson B.M."/>
            <person name="Perea J."/>
            <person name="Philippsen P."/>
            <person name="Pierard A."/>
            <person name="Planta R.J."/>
            <person name="Plevani P."/>
            <person name="Poetsch B."/>
            <person name="Pohl F.M."/>
            <person name="Purnelle B."/>
            <person name="Ramezani Rad M."/>
            <person name="Rasmussen S.W."/>
            <person name="Raynal A."/>
            <person name="Remacha M.A."/>
            <person name="Richterich P."/>
            <person name="Roberts A.B."/>
            <person name="Rodriguez F."/>
            <person name="Sanz E."/>
            <person name="Schaaff-Gerstenschlaeger I."/>
            <person name="Scherens B."/>
            <person name="Schweitzer B."/>
            <person name="Shu Y."/>
            <person name="Skala J."/>
            <person name="Slonimski P.P."/>
            <person name="Sor F."/>
            <person name="Soustelle C."/>
            <person name="Spiegelberg R."/>
            <person name="Stateva L.I."/>
            <person name="Steensma H.Y."/>
            <person name="Steiner S."/>
            <person name="Thierry A."/>
            <person name="Thireos G."/>
            <person name="Tzermia M."/>
            <person name="Urrestarazu L.A."/>
            <person name="Valle G."/>
            <person name="Vetter I."/>
            <person name="van Vliet-Reedijk J.C."/>
            <person name="Voet M."/>
            <person name="Volckaert G."/>
            <person name="Vreken P."/>
            <person name="Wang H."/>
            <person name="Warmington J.R."/>
            <person name="von Wettstein D."/>
            <person name="Wicksteed B.L."/>
            <person name="Wilson C."/>
            <person name="Wurst H."/>
            <person name="Xu G."/>
            <person name="Yoshikawa A."/>
            <person name="Zimmermann F.K."/>
            <person name="Sgouros J.G."/>
        </authorList>
    </citation>
    <scope>NUCLEOTIDE SEQUENCE [LARGE SCALE GENOMIC DNA]</scope>
    <source>
        <strain>ATCC 204508 / S288c</strain>
    </source>
</reference>
<reference key="2">
    <citation type="journal article" date="2014" name="G3 (Bethesda)">
        <title>The reference genome sequence of Saccharomyces cerevisiae: Then and now.</title>
        <authorList>
            <person name="Engel S.R."/>
            <person name="Dietrich F.S."/>
            <person name="Fisk D.G."/>
            <person name="Binkley G."/>
            <person name="Balakrishnan R."/>
            <person name="Costanzo M.C."/>
            <person name="Dwight S.S."/>
            <person name="Hitz B.C."/>
            <person name="Karra K."/>
            <person name="Nash R.S."/>
            <person name="Weng S."/>
            <person name="Wong E.D."/>
            <person name="Lloyd P."/>
            <person name="Skrzypek M.S."/>
            <person name="Miyasato S.R."/>
            <person name="Simison M."/>
            <person name="Cherry J.M."/>
        </authorList>
    </citation>
    <scope>GENOME REANNOTATION</scope>
    <source>
        <strain>ATCC 204508 / S288c</strain>
    </source>
</reference>
<feature type="chain" id="PRO_0000202576" description="Uncharacterized protein YCR085W">
    <location>
        <begin position="1"/>
        <end position="117"/>
    </location>
</feature>
<keyword id="KW-1185">Reference proteome</keyword>
<sequence>MLFLYTYVYVFLCTNNDVYNETSVMLSKTSAHCFIAEEVTTDNGLICGLAMLGKTKYQFYELFTVYSIQSLTQLASRVKKGGLIMARLILFTLCALPVLFHFILFMLQYLVFVYIEK</sequence>
<gene>
    <name type="ordered locus">YCR085W</name>
    <name type="ORF">YCR85W</name>
</gene>
<organism>
    <name type="scientific">Saccharomyces cerevisiae (strain ATCC 204508 / S288c)</name>
    <name type="common">Baker's yeast</name>
    <dbReference type="NCBI Taxonomy" id="559292"/>
    <lineage>
        <taxon>Eukaryota</taxon>
        <taxon>Fungi</taxon>
        <taxon>Dikarya</taxon>
        <taxon>Ascomycota</taxon>
        <taxon>Saccharomycotina</taxon>
        <taxon>Saccharomycetes</taxon>
        <taxon>Saccharomycetales</taxon>
        <taxon>Saccharomycetaceae</taxon>
        <taxon>Saccharomyces</taxon>
    </lineage>
</organism>
<accession>P25650</accession>
<accession>A0A1S0T055</accession>
<proteinExistence type="predicted"/>